<comment type="function">
    <text evidence="1">Potent postsynaptic neurotoxin. Displays readily reversible competitive antagonism at the nicotinic acetylcholine receptor (nAChR).</text>
</comment>
<comment type="subcellular location">
    <subcellularLocation>
        <location evidence="5">Secreted</location>
    </subcellularLocation>
</comment>
<comment type="tissue specificity">
    <text evidence="5">Expressed by the venom gland.</text>
</comment>
<comment type="similarity">
    <text evidence="4">Belongs to the three-finger toxin family. Ancestral subfamily. Boigatoxin sub-subfamily.</text>
</comment>
<comment type="caution">
    <text evidence="4">2 Cys residues are missing that are conventionally part of disulfide bonds II and III.</text>
</comment>
<protein>
    <recommendedName>
        <fullName evidence="6">Toxin 3FTx-Tri3</fullName>
    </recommendedName>
</protein>
<dbReference type="EMBL" id="EU029678">
    <property type="protein sequence ID" value="ABU68478.1"/>
    <property type="molecule type" value="mRNA"/>
</dbReference>
<dbReference type="SMR" id="A7X3S2"/>
<dbReference type="GO" id="GO:0005576">
    <property type="term" value="C:extracellular region"/>
    <property type="evidence" value="ECO:0007669"/>
    <property type="project" value="UniProtKB-SubCell"/>
</dbReference>
<dbReference type="GO" id="GO:0030550">
    <property type="term" value="F:acetylcholine receptor inhibitor activity"/>
    <property type="evidence" value="ECO:0007669"/>
    <property type="project" value="UniProtKB-KW"/>
</dbReference>
<dbReference type="GO" id="GO:0099106">
    <property type="term" value="F:ion channel regulator activity"/>
    <property type="evidence" value="ECO:0007669"/>
    <property type="project" value="UniProtKB-KW"/>
</dbReference>
<dbReference type="GO" id="GO:0090729">
    <property type="term" value="F:toxin activity"/>
    <property type="evidence" value="ECO:0007669"/>
    <property type="project" value="UniProtKB-KW"/>
</dbReference>
<dbReference type="CDD" id="cd00206">
    <property type="entry name" value="TFP_snake_toxin"/>
    <property type="match status" value="1"/>
</dbReference>
<dbReference type="Gene3D" id="2.10.60.10">
    <property type="entry name" value="CD59"/>
    <property type="match status" value="1"/>
</dbReference>
<dbReference type="InterPro" id="IPR003571">
    <property type="entry name" value="Snake_3FTx"/>
</dbReference>
<dbReference type="InterPro" id="IPR045860">
    <property type="entry name" value="Snake_toxin-like_sf"/>
</dbReference>
<dbReference type="InterPro" id="IPR018354">
    <property type="entry name" value="Snake_toxin_con_site"/>
</dbReference>
<dbReference type="InterPro" id="IPR054131">
    <property type="entry name" value="Toxin_cobra-type"/>
</dbReference>
<dbReference type="Pfam" id="PF21947">
    <property type="entry name" value="Toxin_cobra-type"/>
    <property type="match status" value="1"/>
</dbReference>
<dbReference type="SUPFAM" id="SSF57302">
    <property type="entry name" value="Snake toxin-like"/>
    <property type="match status" value="1"/>
</dbReference>
<dbReference type="PROSITE" id="PS00272">
    <property type="entry name" value="SNAKE_TOXIN"/>
    <property type="match status" value="1"/>
</dbReference>
<feature type="signal peptide" evidence="3">
    <location>
        <begin position="1"/>
        <end position="19"/>
    </location>
</feature>
<feature type="propeptide" id="PRO_0000316191" evidence="1">
    <location>
        <begin position="20"/>
        <end position="34"/>
    </location>
</feature>
<feature type="chain" id="PRO_0000316192" description="Toxin 3FTx-Tri3">
    <location>
        <begin position="35"/>
        <end position="111"/>
    </location>
</feature>
<feature type="modified residue" description="Pyrrolidone carboxylic acid" evidence="1">
    <location>
        <position position="35"/>
    </location>
</feature>
<feature type="disulfide bond" evidence="2">
    <location>
        <begin position="44"/>
        <end position="68"/>
    </location>
</feature>
<feature type="disulfide bond" evidence="4">
    <location>
        <begin position="47"/>
        <end position="87"/>
    </location>
</feature>
<feature type="disulfide bond" evidence="2">
    <location>
        <begin position="91"/>
        <end position="102"/>
    </location>
</feature>
<feature type="disulfide bond" evidence="2">
    <location>
        <begin position="103"/>
        <end position="108"/>
    </location>
</feature>
<accession>A7X3S2</accession>
<evidence type="ECO:0000250" key="1"/>
<evidence type="ECO:0000250" key="2">
    <source>
        <dbReference type="UniProtKB" id="P81782"/>
    </source>
</evidence>
<evidence type="ECO:0000255" key="3"/>
<evidence type="ECO:0000305" key="4"/>
<evidence type="ECO:0000305" key="5">
    <source>
    </source>
</evidence>
<evidence type="ECO:0000312" key="6">
    <source>
        <dbReference type="EMBL" id="ABU68478.1"/>
    </source>
</evidence>
<reference key="1">
    <citation type="journal article" date="2008" name="Mol. Cell. Proteomics">
        <title>Evolution of an arsenal: structural and functional diversification of the venom system in the advanced snakes (Caenophidia).</title>
        <authorList>
            <person name="Fry B.G."/>
            <person name="Scheib H."/>
            <person name="van der Weerd L."/>
            <person name="Young B."/>
            <person name="McNaughtan J."/>
            <person name="Ramjan S.F.R."/>
            <person name="Vidal N."/>
            <person name="Poelmann R.E."/>
            <person name="Norman J.A."/>
        </authorList>
    </citation>
    <scope>NUCLEOTIDE SEQUENCE [LARGE SCALE MRNA]</scope>
    <source>
        <tissue>Venom gland</tissue>
    </source>
</reference>
<keyword id="KW-0008">Acetylcholine receptor inhibiting toxin</keyword>
<keyword id="KW-1015">Disulfide bond</keyword>
<keyword id="KW-0872">Ion channel impairing toxin</keyword>
<keyword id="KW-0528">Neurotoxin</keyword>
<keyword id="KW-0629">Postsynaptic neurotoxin</keyword>
<keyword id="KW-0873">Pyrrolidone carboxylic acid</keyword>
<keyword id="KW-0964">Secreted</keyword>
<keyword id="KW-0732">Signal</keyword>
<keyword id="KW-0800">Toxin</keyword>
<organism>
    <name type="scientific">Trimorphodon biscutatus</name>
    <name type="common">Western lyre snake</name>
    <dbReference type="NCBI Taxonomy" id="338818"/>
    <lineage>
        <taxon>Eukaryota</taxon>
        <taxon>Metazoa</taxon>
        <taxon>Chordata</taxon>
        <taxon>Craniata</taxon>
        <taxon>Vertebrata</taxon>
        <taxon>Euteleostomi</taxon>
        <taxon>Lepidosauria</taxon>
        <taxon>Squamata</taxon>
        <taxon>Bifurcata</taxon>
        <taxon>Unidentata</taxon>
        <taxon>Episquamata</taxon>
        <taxon>Toxicofera</taxon>
        <taxon>Serpentes</taxon>
        <taxon>Colubroidea</taxon>
        <taxon>Colubridae</taxon>
        <taxon>Colubrinae</taxon>
        <taxon>Trimorphodon</taxon>
    </lineage>
</organism>
<name>3NB3_TRIBI</name>
<sequence length="111" mass="11931">MKTLLLALVVVAFMCLGSADEVGLGNEQIDRGRRQAIGPPFTRCSKCNRNWSPPFPLGLYTVSHVKSCGGHLSSIGQCGEDWVVKGCAKTCPTAGPGERVKCCYSPRCNKN</sequence>
<proteinExistence type="inferred from homology"/>